<gene>
    <name type="primary">gltA</name>
    <name type="ordered locus">BSU18450</name>
</gene>
<organism>
    <name type="scientific">Bacillus subtilis (strain 168)</name>
    <dbReference type="NCBI Taxonomy" id="224308"/>
    <lineage>
        <taxon>Bacteria</taxon>
        <taxon>Bacillati</taxon>
        <taxon>Bacillota</taxon>
        <taxon>Bacilli</taxon>
        <taxon>Bacillales</taxon>
        <taxon>Bacillaceae</taxon>
        <taxon>Bacillus</taxon>
    </lineage>
</organism>
<feature type="chain" id="PRO_0000170797" description="Glutamate synthase [NADPH] large chain">
    <location>
        <begin position="1"/>
        <end position="1520"/>
    </location>
</feature>
<feature type="domain" description="Glutamine amidotransferase type-2" evidence="2">
    <location>
        <begin position="22"/>
        <end position="415"/>
    </location>
</feature>
<feature type="region of interest" description="Disordered" evidence="3">
    <location>
        <begin position="890"/>
        <end position="913"/>
    </location>
</feature>
<feature type="compositionally biased region" description="Basic and acidic residues" evidence="3">
    <location>
        <begin position="900"/>
        <end position="913"/>
    </location>
</feature>
<feature type="active site" description="For GATase activity" evidence="1">
    <location>
        <position position="22"/>
    </location>
</feature>
<feature type="binding site" evidence="1">
    <location>
        <begin position="1060"/>
        <end position="1112"/>
    </location>
    <ligand>
        <name>FMN</name>
        <dbReference type="ChEBI" id="CHEBI:58210"/>
    </ligand>
</feature>
<feature type="binding site" evidence="1">
    <location>
        <position position="1113"/>
    </location>
    <ligand>
        <name>[3Fe-4S] cluster</name>
        <dbReference type="ChEBI" id="CHEBI:21137"/>
    </ligand>
</feature>
<feature type="binding site" evidence="1">
    <location>
        <position position="1119"/>
    </location>
    <ligand>
        <name>[3Fe-4S] cluster</name>
        <dbReference type="ChEBI" id="CHEBI:21137"/>
    </ligand>
</feature>
<feature type="binding site" evidence="1">
    <location>
        <position position="1124"/>
    </location>
    <ligand>
        <name>[3Fe-4S] cluster</name>
        <dbReference type="ChEBI" id="CHEBI:21137"/>
    </ligand>
</feature>
<sequence length="1520" mass="168772">MTYNQMPKAQGLYRPEFEHDACGIGLYAHLKGKQTHDIVKQGLKMLCQLDHRGGQGSDPDTGDGAGLLVQIPDAFFRKECKNINLPEKERYGVGMVFFSQKEDERKKIEKQINALIEQEGQVVLGWRTVPVNVGKIGTVAQKSCPFVRQVFIGASSDLKDNLSFERKLYVIRKQAENWGVTEGLDFYFASLSSQTIVYKGLLTPEQVDAFYSDLQDEAFVSAFALVHSRFSTNTFPTWERAHPNRYLVHNGEINTLRGNINWMRAREQQFVSESFGEDLNKILPILNADGSDSSILDNAFEFFVMAGRKPAHTAMMLIPEPWTENTHMSKEKRAFYEYHSSLMEPWDGPTAISFTDGKQIGAILDRNGLRPARYYVTKDDYIIFSSEVGVIEVEQENVLYKNRLEPGKMLLIDLEEGRIISDEEVKTQIATEYPYQKWLEEELVQVNPDPESREEEQFSDLLTRQKAFGYTYEDIQKYLIPVIKEGKDPLGSMGNDAPLAVLSDRAQSLFNYFKQLFAQVTNPPIDAIREQLVTSTMTWLGAEGDLLHPSERNVRRIKLYTPVLSNEQFYALKTIVHPDLKSQKIDVLFSEDLERGLKDMFTQAEKAISQGVSLLILSDKKMNERLTPIPPLLAVSALHQHLIRKGLRTKVSIIVESGEAREVHHFAALIGYGADAINPYLAYATYKQEIDEGRLDISYEEAVSKYGKSITEGVVKVMSKMGISTVQSYRGAQIFEAVGISRDVIDRYFSGTASQLGGIDLQTIAEEAQRRHREAYQDDYSKTLEPGSDFQWRNGGEHHAFNPKTIHTLQWACRRNDYNLFKQYTKAADEERIGFLRNLFAFDGNRKPLKLEEVESAESIVKRFKTGAMSFGSLSKEAHEALAIAMNRLGGKSNSGEGGEDPKRFVPDENGDDRRSAIKQIASGRFGVKSHYLVNADELQIKMAQGAKPGEGGQLPGNKVYPWVADVRGSTPGVGLISPPPHHDIYSIEDLAQLIHDLKNANRDARISVKLVSKAGVGTIAAGVAKATADVIVISGYDGGTGASPKTSIKHTGLPWELGLAEAHQTLMLNGLRDRVVLETDGKLMTGRDVVMAALLGAEEFGFATAPLVVLGCVMMRACHLDTCPVGVATQNPELRKKFMGDPDHIVNYMLFIAEEVREYMAALGFKTFDEMIGRTDVLHASERAKEHWKASQLDLSTLLYQPEGVRTFQSPQNHKIDQSLDITTILPAVQEAIESGKEADISIEINNTNRVAGTITGSEISKRYGEEGLPEDTIKLHFTGSAGQSFGAFVPKGMTLYLDGDSNDYVGKGLSGGKIIVKSSEGFNSASDDNVIIGNVAFYGATSGEAYINGRAGERFAVRNSGVNVVVEGIGDHGCEYMTGGSVVVLGDVGKNFAAGMSGGIAYVLTEDVKAFKRKCNLEMILFESLEDEKEIQQIKAMLERHTAYTNSQKAEDLLDQWEDSVKKFVKVIPKNYKQMLASIEEQKAAGLSDEEAIMFAFEANTKPKQNTAASGQKQAVVQ</sequence>
<name>GLTA_BACSU</name>
<comment type="catalytic activity">
    <reaction>
        <text>2 L-glutamate + NADP(+) = L-glutamine + 2-oxoglutarate + NADPH + H(+)</text>
        <dbReference type="Rhea" id="RHEA:15501"/>
        <dbReference type="ChEBI" id="CHEBI:15378"/>
        <dbReference type="ChEBI" id="CHEBI:16810"/>
        <dbReference type="ChEBI" id="CHEBI:29985"/>
        <dbReference type="ChEBI" id="CHEBI:57783"/>
        <dbReference type="ChEBI" id="CHEBI:58349"/>
        <dbReference type="ChEBI" id="CHEBI:58359"/>
        <dbReference type="EC" id="1.4.1.13"/>
    </reaction>
</comment>
<comment type="cofactor">
    <cofactor evidence="1">
        <name>[3Fe-4S] cluster</name>
        <dbReference type="ChEBI" id="CHEBI:21137"/>
    </cofactor>
    <text evidence="1">Binds 1 [3Fe-4S] cluster.</text>
</comment>
<comment type="cofactor">
    <cofactor evidence="1">
        <name>FAD</name>
        <dbReference type="ChEBI" id="CHEBI:57692"/>
    </cofactor>
</comment>
<comment type="cofactor">
    <cofactor evidence="1">
        <name>FMN</name>
        <dbReference type="ChEBI" id="CHEBI:58210"/>
    </cofactor>
</comment>
<comment type="pathway">
    <text>Amino-acid biosynthesis; L-glutamate biosynthesis via GLT pathway; L-glutamate from 2-oxoglutarate and L-glutamine (NADP(+) route): step 1/1.</text>
</comment>
<comment type="pathway">
    <text>Energy metabolism; nitrogen metabolism.</text>
</comment>
<comment type="subunit">
    <text evidence="1">Aggregate of 4 catalytic active heterodimers, consisting of a large and a small subunit.</text>
</comment>
<comment type="induction">
    <text>The gltAB operon is positively regulated by GltC and negatively regulated by TnrA under nitrogen-limited conditions.</text>
</comment>
<comment type="similarity">
    <text evidence="4">Belongs to the glutamate synthase family.</text>
</comment>
<proteinExistence type="evidence at protein level"/>
<evidence type="ECO:0000250" key="1"/>
<evidence type="ECO:0000255" key="2">
    <source>
        <dbReference type="PROSITE-ProRule" id="PRU00609"/>
    </source>
</evidence>
<evidence type="ECO:0000256" key="3">
    <source>
        <dbReference type="SAM" id="MobiDB-lite"/>
    </source>
</evidence>
<evidence type="ECO:0000305" key="4"/>
<protein>
    <recommendedName>
        <fullName>Glutamate synthase [NADPH] large chain</fullName>
        <ecNumber>1.4.1.13</ecNumber>
    </recommendedName>
    <alternativeName>
        <fullName>NADPH-GOGAT</fullName>
    </alternativeName>
</protein>
<reference key="1">
    <citation type="journal article" date="1997" name="Nature">
        <title>The complete genome sequence of the Gram-positive bacterium Bacillus subtilis.</title>
        <authorList>
            <person name="Kunst F."/>
            <person name="Ogasawara N."/>
            <person name="Moszer I."/>
            <person name="Albertini A.M."/>
            <person name="Alloni G."/>
            <person name="Azevedo V."/>
            <person name="Bertero M.G."/>
            <person name="Bessieres P."/>
            <person name="Bolotin A."/>
            <person name="Borchert S."/>
            <person name="Borriss R."/>
            <person name="Boursier L."/>
            <person name="Brans A."/>
            <person name="Braun M."/>
            <person name="Brignell S.C."/>
            <person name="Bron S."/>
            <person name="Brouillet S."/>
            <person name="Bruschi C.V."/>
            <person name="Caldwell B."/>
            <person name="Capuano V."/>
            <person name="Carter N.M."/>
            <person name="Choi S.-K."/>
            <person name="Codani J.-J."/>
            <person name="Connerton I.F."/>
            <person name="Cummings N.J."/>
            <person name="Daniel R.A."/>
            <person name="Denizot F."/>
            <person name="Devine K.M."/>
            <person name="Duesterhoeft A."/>
            <person name="Ehrlich S.D."/>
            <person name="Emmerson P.T."/>
            <person name="Entian K.-D."/>
            <person name="Errington J."/>
            <person name="Fabret C."/>
            <person name="Ferrari E."/>
            <person name="Foulger D."/>
            <person name="Fritz C."/>
            <person name="Fujita M."/>
            <person name="Fujita Y."/>
            <person name="Fuma S."/>
            <person name="Galizzi A."/>
            <person name="Galleron N."/>
            <person name="Ghim S.-Y."/>
            <person name="Glaser P."/>
            <person name="Goffeau A."/>
            <person name="Golightly E.J."/>
            <person name="Grandi G."/>
            <person name="Guiseppi G."/>
            <person name="Guy B.J."/>
            <person name="Haga K."/>
            <person name="Haiech J."/>
            <person name="Harwood C.R."/>
            <person name="Henaut A."/>
            <person name="Hilbert H."/>
            <person name="Holsappel S."/>
            <person name="Hosono S."/>
            <person name="Hullo M.-F."/>
            <person name="Itaya M."/>
            <person name="Jones L.-M."/>
            <person name="Joris B."/>
            <person name="Karamata D."/>
            <person name="Kasahara Y."/>
            <person name="Klaerr-Blanchard M."/>
            <person name="Klein C."/>
            <person name="Kobayashi Y."/>
            <person name="Koetter P."/>
            <person name="Koningstein G."/>
            <person name="Krogh S."/>
            <person name="Kumano M."/>
            <person name="Kurita K."/>
            <person name="Lapidus A."/>
            <person name="Lardinois S."/>
            <person name="Lauber J."/>
            <person name="Lazarevic V."/>
            <person name="Lee S.-M."/>
            <person name="Levine A."/>
            <person name="Liu H."/>
            <person name="Masuda S."/>
            <person name="Mauel C."/>
            <person name="Medigue C."/>
            <person name="Medina N."/>
            <person name="Mellado R.P."/>
            <person name="Mizuno M."/>
            <person name="Moestl D."/>
            <person name="Nakai S."/>
            <person name="Noback M."/>
            <person name="Noone D."/>
            <person name="O'Reilly M."/>
            <person name="Ogawa K."/>
            <person name="Ogiwara A."/>
            <person name="Oudega B."/>
            <person name="Park S.-H."/>
            <person name="Parro V."/>
            <person name="Pohl T.M."/>
            <person name="Portetelle D."/>
            <person name="Porwollik S."/>
            <person name="Prescott A.M."/>
            <person name="Presecan E."/>
            <person name="Pujic P."/>
            <person name="Purnelle B."/>
            <person name="Rapoport G."/>
            <person name="Rey M."/>
            <person name="Reynolds S."/>
            <person name="Rieger M."/>
            <person name="Rivolta C."/>
            <person name="Rocha E."/>
            <person name="Roche B."/>
            <person name="Rose M."/>
            <person name="Sadaie Y."/>
            <person name="Sato T."/>
            <person name="Scanlan E."/>
            <person name="Schleich S."/>
            <person name="Schroeter R."/>
            <person name="Scoffone F."/>
            <person name="Sekiguchi J."/>
            <person name="Sekowska A."/>
            <person name="Seror S.J."/>
            <person name="Serror P."/>
            <person name="Shin B.-S."/>
            <person name="Soldo B."/>
            <person name="Sorokin A."/>
            <person name="Tacconi E."/>
            <person name="Takagi T."/>
            <person name="Takahashi H."/>
            <person name="Takemaru K."/>
            <person name="Takeuchi M."/>
            <person name="Tamakoshi A."/>
            <person name="Tanaka T."/>
            <person name="Terpstra P."/>
            <person name="Tognoni A."/>
            <person name="Tosato V."/>
            <person name="Uchiyama S."/>
            <person name="Vandenbol M."/>
            <person name="Vannier F."/>
            <person name="Vassarotti A."/>
            <person name="Viari A."/>
            <person name="Wambutt R."/>
            <person name="Wedler E."/>
            <person name="Wedler H."/>
            <person name="Weitzenegger T."/>
            <person name="Winters P."/>
            <person name="Wipat A."/>
            <person name="Yamamoto H."/>
            <person name="Yamane K."/>
            <person name="Yasumoto K."/>
            <person name="Yata K."/>
            <person name="Yoshida K."/>
            <person name="Yoshikawa H.-F."/>
            <person name="Zumstein E."/>
            <person name="Yoshikawa H."/>
            <person name="Danchin A."/>
        </authorList>
    </citation>
    <scope>NUCLEOTIDE SEQUENCE [LARGE SCALE GENOMIC DNA]</scope>
    <source>
        <strain>168</strain>
    </source>
</reference>
<reference key="2">
    <citation type="journal article" date="2009" name="Microbiology">
        <title>From a consortium sequence to a unified sequence: the Bacillus subtilis 168 reference genome a decade later.</title>
        <authorList>
            <person name="Barbe V."/>
            <person name="Cruveiller S."/>
            <person name="Kunst F."/>
            <person name="Lenoble P."/>
            <person name="Meurice G."/>
            <person name="Sekowska A."/>
            <person name="Vallenet D."/>
            <person name="Wang T."/>
            <person name="Moszer I."/>
            <person name="Medigue C."/>
            <person name="Danchin A."/>
        </authorList>
    </citation>
    <scope>SEQUENCE REVISION TO 1412</scope>
</reference>
<reference key="3">
    <citation type="journal article" date="1989" name="J. Bacteriol.">
        <title>Positive regulation of glutamate biosynthesis in Bacillus subtilis.</title>
        <authorList>
            <person name="Bohannon D.E."/>
            <person name="Sonenshein A.L."/>
        </authorList>
    </citation>
    <scope>NUCLEOTIDE SEQUENCE [GENOMIC DNA] OF 1-21</scope>
</reference>
<reference key="4">
    <citation type="journal article" date="2000" name="J. Bacteriol.">
        <title>Role of TnrA in nitrogen source-dependent repression of Bacillus subtilis glutamate synthase gene expression.</title>
        <authorList>
            <person name="Belitsky B.R."/>
            <person name="Wray L.V. Jr."/>
            <person name="Fisher S.H."/>
            <person name="Bohannon D.E."/>
            <person name="Sonenshein A.L."/>
        </authorList>
    </citation>
    <scope>REGULATION BY TNRA</scope>
</reference>
<reference key="5">
    <citation type="journal article" date="2003" name="Mol. Microbiol.">
        <title>Identification of additional TnrA-regulated genes of Bacillus subtilis associated with a TnrA box.</title>
        <authorList>
            <person name="Yoshida K."/>
            <person name="Yamaguchi H."/>
            <person name="Kinehara M."/>
            <person name="Ohki Y.-H."/>
            <person name="Nakaura Y."/>
            <person name="Fujita Y."/>
        </authorList>
    </citation>
    <scope>REGULATION BY TNRA</scope>
</reference>
<accession>P39812</accession>
<keyword id="KW-0002">3D-structure</keyword>
<keyword id="KW-0003">3Fe-4S</keyword>
<keyword id="KW-0028">Amino-acid biosynthesis</keyword>
<keyword id="KW-0274">FAD</keyword>
<keyword id="KW-0285">Flavoprotein</keyword>
<keyword id="KW-0288">FMN</keyword>
<keyword id="KW-0314">Glutamate biosynthesis</keyword>
<keyword id="KW-0315">Glutamine amidotransferase</keyword>
<keyword id="KW-0408">Iron</keyword>
<keyword id="KW-0411">Iron-sulfur</keyword>
<keyword id="KW-0479">Metal-binding</keyword>
<keyword id="KW-0521">NADP</keyword>
<keyword id="KW-0560">Oxidoreductase</keyword>
<keyword id="KW-1185">Reference proteome</keyword>
<dbReference type="EC" id="1.4.1.13"/>
<dbReference type="EMBL" id="AL009126">
    <property type="protein sequence ID" value="CAB13728.2"/>
    <property type="molecule type" value="Genomic_DNA"/>
</dbReference>
<dbReference type="EMBL" id="M28509">
    <property type="protein sequence ID" value="AAA16438.1"/>
    <property type="molecule type" value="Unassigned_DNA"/>
</dbReference>
<dbReference type="PIR" id="G69634">
    <property type="entry name" value="G69634"/>
</dbReference>
<dbReference type="RefSeq" id="NP_389727.2">
    <property type="nucleotide sequence ID" value="NC_000964.3"/>
</dbReference>
<dbReference type="PDB" id="7MFT">
    <property type="method" value="EM"/>
    <property type="resolution" value="3.90 A"/>
    <property type="chains" value="G=1-1520"/>
</dbReference>
<dbReference type="PDBsum" id="7MFT"/>
<dbReference type="SMR" id="P39812"/>
<dbReference type="FunCoup" id="P39812">
    <property type="interactions" value="679"/>
</dbReference>
<dbReference type="IntAct" id="P39812">
    <property type="interactions" value="1"/>
</dbReference>
<dbReference type="MINT" id="P39812"/>
<dbReference type="STRING" id="224308.BSU18450"/>
<dbReference type="MEROPS" id="C44.003"/>
<dbReference type="PaxDb" id="224308-BSU18450"/>
<dbReference type="EnsemblBacteria" id="CAB13728">
    <property type="protein sequence ID" value="CAB13728"/>
    <property type="gene ID" value="BSU_18450"/>
</dbReference>
<dbReference type="GeneID" id="940024"/>
<dbReference type="KEGG" id="bsu:BSU18450"/>
<dbReference type="PATRIC" id="fig|224308.179.peg.2012"/>
<dbReference type="eggNOG" id="COG0067">
    <property type="taxonomic scope" value="Bacteria"/>
</dbReference>
<dbReference type="eggNOG" id="COG0069">
    <property type="taxonomic scope" value="Bacteria"/>
</dbReference>
<dbReference type="eggNOG" id="COG0070">
    <property type="taxonomic scope" value="Bacteria"/>
</dbReference>
<dbReference type="InParanoid" id="P39812"/>
<dbReference type="OrthoDB" id="9758182at2"/>
<dbReference type="PhylomeDB" id="P39812"/>
<dbReference type="BioCyc" id="BSUB:BSU18450-MONOMER"/>
<dbReference type="BRENDA" id="1.4.1.13">
    <property type="organism ID" value="658"/>
</dbReference>
<dbReference type="SABIO-RK" id="P39812"/>
<dbReference type="UniPathway" id="UPA00045"/>
<dbReference type="UniPathway" id="UPA00634">
    <property type="reaction ID" value="UER00689"/>
</dbReference>
<dbReference type="Proteomes" id="UP000001570">
    <property type="component" value="Chromosome"/>
</dbReference>
<dbReference type="GO" id="GO:0051538">
    <property type="term" value="F:3 iron, 4 sulfur cluster binding"/>
    <property type="evidence" value="ECO:0007669"/>
    <property type="project" value="UniProtKB-KW"/>
</dbReference>
<dbReference type="GO" id="GO:0004355">
    <property type="term" value="F:glutamate synthase (NADPH) activity"/>
    <property type="evidence" value="ECO:0007669"/>
    <property type="project" value="UniProtKB-EC"/>
</dbReference>
<dbReference type="GO" id="GO:0015930">
    <property type="term" value="F:glutamate synthase activity"/>
    <property type="evidence" value="ECO:0000318"/>
    <property type="project" value="GO_Central"/>
</dbReference>
<dbReference type="GO" id="GO:0046872">
    <property type="term" value="F:metal ion binding"/>
    <property type="evidence" value="ECO:0007669"/>
    <property type="project" value="UniProtKB-KW"/>
</dbReference>
<dbReference type="GO" id="GO:0019676">
    <property type="term" value="P:ammonia assimilation cycle"/>
    <property type="evidence" value="ECO:0000318"/>
    <property type="project" value="GO_Central"/>
</dbReference>
<dbReference type="GO" id="GO:0006537">
    <property type="term" value="P:glutamate biosynthetic process"/>
    <property type="evidence" value="ECO:0000318"/>
    <property type="project" value="GO_Central"/>
</dbReference>
<dbReference type="GO" id="GO:0097054">
    <property type="term" value="P:L-glutamate biosynthetic process"/>
    <property type="evidence" value="ECO:0007669"/>
    <property type="project" value="UniProtKB-UniPathway"/>
</dbReference>
<dbReference type="CDD" id="cd00982">
    <property type="entry name" value="gltB_C"/>
    <property type="match status" value="1"/>
</dbReference>
<dbReference type="CDD" id="cd00713">
    <property type="entry name" value="GltS"/>
    <property type="match status" value="1"/>
</dbReference>
<dbReference type="CDD" id="cd02808">
    <property type="entry name" value="GltS_FMN"/>
    <property type="match status" value="1"/>
</dbReference>
<dbReference type="FunFam" id="3.20.20.70:FF:000031">
    <property type="entry name" value="Glutamate synthase 1 [NADH]"/>
    <property type="match status" value="1"/>
</dbReference>
<dbReference type="FunFam" id="3.20.20.70:FF:000053">
    <property type="entry name" value="Glutamate synthase large subunit"/>
    <property type="match status" value="1"/>
</dbReference>
<dbReference type="FunFam" id="2.160.20.60:FF:000001">
    <property type="entry name" value="Glutamate synthase, large subunit"/>
    <property type="match status" value="1"/>
</dbReference>
<dbReference type="FunFam" id="3.60.20.10:FF:000001">
    <property type="entry name" value="Glutamate synthase, large subunit"/>
    <property type="match status" value="1"/>
</dbReference>
<dbReference type="Gene3D" id="3.20.20.70">
    <property type="entry name" value="Aldolase class I"/>
    <property type="match status" value="2"/>
</dbReference>
<dbReference type="Gene3D" id="2.160.20.60">
    <property type="entry name" value="Glutamate synthase, alpha subunit, C-terminal domain"/>
    <property type="match status" value="1"/>
</dbReference>
<dbReference type="Gene3D" id="3.60.20.10">
    <property type="entry name" value="Glutamine Phosphoribosylpyrophosphate, subunit 1, domain 1"/>
    <property type="match status" value="1"/>
</dbReference>
<dbReference type="InterPro" id="IPR013785">
    <property type="entry name" value="Aldolase_TIM"/>
</dbReference>
<dbReference type="InterPro" id="IPR050711">
    <property type="entry name" value="ET-N_metabolism_enzyme"/>
</dbReference>
<dbReference type="InterPro" id="IPR017932">
    <property type="entry name" value="GATase_2_dom"/>
</dbReference>
<dbReference type="InterPro" id="IPR002489">
    <property type="entry name" value="Glu_synth_asu_C"/>
</dbReference>
<dbReference type="InterPro" id="IPR036485">
    <property type="entry name" value="Glu_synth_asu_C_sf"/>
</dbReference>
<dbReference type="InterPro" id="IPR006982">
    <property type="entry name" value="Glu_synth_centr_N"/>
</dbReference>
<dbReference type="InterPro" id="IPR002932">
    <property type="entry name" value="Glu_synthdom"/>
</dbReference>
<dbReference type="InterPro" id="IPR029055">
    <property type="entry name" value="Ntn_hydrolases_N"/>
</dbReference>
<dbReference type="NCBIfam" id="NF008730">
    <property type="entry name" value="PRK11750.1"/>
    <property type="match status" value="1"/>
</dbReference>
<dbReference type="PANTHER" id="PTHR11938">
    <property type="entry name" value="FAD NADPH DEHYDROGENASE/OXIDOREDUCTASE"/>
    <property type="match status" value="1"/>
</dbReference>
<dbReference type="PANTHER" id="PTHR11938:SF133">
    <property type="entry name" value="GLUTAMATE SYNTHASE (NADH)"/>
    <property type="match status" value="1"/>
</dbReference>
<dbReference type="Pfam" id="PF00310">
    <property type="entry name" value="GATase_2"/>
    <property type="match status" value="1"/>
</dbReference>
<dbReference type="Pfam" id="PF04898">
    <property type="entry name" value="Glu_syn_central"/>
    <property type="match status" value="1"/>
</dbReference>
<dbReference type="Pfam" id="PF01645">
    <property type="entry name" value="Glu_synthase"/>
    <property type="match status" value="1"/>
</dbReference>
<dbReference type="Pfam" id="PF01493">
    <property type="entry name" value="GXGXG"/>
    <property type="match status" value="1"/>
</dbReference>
<dbReference type="SUPFAM" id="SSF69336">
    <property type="entry name" value="Alpha subunit of glutamate synthase, C-terminal domain"/>
    <property type="match status" value="1"/>
</dbReference>
<dbReference type="SUPFAM" id="SSF51395">
    <property type="entry name" value="FMN-linked oxidoreductases"/>
    <property type="match status" value="1"/>
</dbReference>
<dbReference type="SUPFAM" id="SSF56235">
    <property type="entry name" value="N-terminal nucleophile aminohydrolases (Ntn hydrolases)"/>
    <property type="match status" value="1"/>
</dbReference>
<dbReference type="PROSITE" id="PS51278">
    <property type="entry name" value="GATASE_TYPE_2"/>
    <property type="match status" value="1"/>
</dbReference>